<comment type="function">
    <text evidence="1">Catalyzes the interconversion of beta-pyran and beta-furan forms of D-ribose.</text>
</comment>
<comment type="catalytic activity">
    <reaction evidence="1">
        <text>beta-D-ribopyranose = beta-D-ribofuranose</text>
        <dbReference type="Rhea" id="RHEA:25432"/>
        <dbReference type="ChEBI" id="CHEBI:27476"/>
        <dbReference type="ChEBI" id="CHEBI:47002"/>
        <dbReference type="EC" id="5.4.99.62"/>
    </reaction>
</comment>
<comment type="pathway">
    <text evidence="1">Carbohydrate metabolism; D-ribose degradation; D-ribose 5-phosphate from beta-D-ribopyranose: step 1/2.</text>
</comment>
<comment type="subunit">
    <text evidence="1">Homodecamer.</text>
</comment>
<comment type="subcellular location">
    <subcellularLocation>
        <location evidence="1">Cytoplasm</location>
    </subcellularLocation>
</comment>
<comment type="similarity">
    <text evidence="1">Belongs to the RbsD / FucU family. RbsD subfamily.</text>
</comment>
<accession>Q2YVA4</accession>
<keyword id="KW-0119">Carbohydrate metabolism</keyword>
<keyword id="KW-0963">Cytoplasm</keyword>
<keyword id="KW-0413">Isomerase</keyword>
<gene>
    <name evidence="1" type="primary">rbsD</name>
    <name type="ordered locus">SAB0209c</name>
</gene>
<protein>
    <recommendedName>
        <fullName evidence="1">D-ribose pyranase</fullName>
        <ecNumber evidence="1">5.4.99.62</ecNumber>
    </recommendedName>
</protein>
<feature type="chain" id="PRO_0000346261" description="D-ribose pyranase">
    <location>
        <begin position="1"/>
        <end position="134"/>
    </location>
</feature>
<feature type="active site" description="Proton donor" evidence="1">
    <location>
        <position position="20"/>
    </location>
</feature>
<feature type="binding site" evidence="1">
    <location>
        <position position="28"/>
    </location>
    <ligand>
        <name>substrate</name>
    </ligand>
</feature>
<feature type="binding site" evidence="1">
    <location>
        <position position="99"/>
    </location>
    <ligand>
        <name>substrate</name>
    </ligand>
</feature>
<feature type="binding site" evidence="1">
    <location>
        <begin position="123"/>
        <end position="125"/>
    </location>
    <ligand>
        <name>substrate</name>
    </ligand>
</feature>
<proteinExistence type="inferred from homology"/>
<sequence>MKKSAVLNEHISKAIATIGHFDLLTINDAGMPIPNDHRRIDLAVTKNLPRFIDVLATVLEEMEIQKIYLAEEIKEHNPTQLQQIKQLISSEIEIIFIPHEEMKSNLAHPLNKGNIRTGETTPYSNIALESNVTF</sequence>
<dbReference type="EC" id="5.4.99.62" evidence="1"/>
<dbReference type="EMBL" id="AJ938182">
    <property type="protein sequence ID" value="CAI79897.1"/>
    <property type="molecule type" value="Genomic_DNA"/>
</dbReference>
<dbReference type="RefSeq" id="WP_000747873.1">
    <property type="nucleotide sequence ID" value="NC_007622.1"/>
</dbReference>
<dbReference type="SMR" id="Q2YVA4"/>
<dbReference type="KEGG" id="sab:SAB0209c"/>
<dbReference type="HOGENOM" id="CLU_135498_0_0_9"/>
<dbReference type="UniPathway" id="UPA00916">
    <property type="reaction ID" value="UER00888"/>
</dbReference>
<dbReference type="GO" id="GO:0005829">
    <property type="term" value="C:cytosol"/>
    <property type="evidence" value="ECO:0007669"/>
    <property type="project" value="TreeGrafter"/>
</dbReference>
<dbReference type="GO" id="GO:0062193">
    <property type="term" value="F:D-ribose pyranase activity"/>
    <property type="evidence" value="ECO:0007669"/>
    <property type="project" value="UniProtKB-EC"/>
</dbReference>
<dbReference type="GO" id="GO:0016872">
    <property type="term" value="F:intramolecular lyase activity"/>
    <property type="evidence" value="ECO:0007669"/>
    <property type="project" value="UniProtKB-UniRule"/>
</dbReference>
<dbReference type="GO" id="GO:0048029">
    <property type="term" value="F:monosaccharide binding"/>
    <property type="evidence" value="ECO:0007669"/>
    <property type="project" value="InterPro"/>
</dbReference>
<dbReference type="GO" id="GO:0019303">
    <property type="term" value="P:D-ribose catabolic process"/>
    <property type="evidence" value="ECO:0007669"/>
    <property type="project" value="UniProtKB-UniRule"/>
</dbReference>
<dbReference type="FunFam" id="3.40.1650.10:FF:000004">
    <property type="entry name" value="D-ribose pyranase"/>
    <property type="match status" value="1"/>
</dbReference>
<dbReference type="Gene3D" id="3.40.1650.10">
    <property type="entry name" value="RbsD-like domain"/>
    <property type="match status" value="1"/>
</dbReference>
<dbReference type="HAMAP" id="MF_01661">
    <property type="entry name" value="D_rib_pyranase"/>
    <property type="match status" value="1"/>
</dbReference>
<dbReference type="InterPro" id="IPR023064">
    <property type="entry name" value="D-ribose_pyranase"/>
</dbReference>
<dbReference type="InterPro" id="IPR023750">
    <property type="entry name" value="RbsD-like_sf"/>
</dbReference>
<dbReference type="InterPro" id="IPR007721">
    <property type="entry name" value="RbsD_FucU"/>
</dbReference>
<dbReference type="NCBIfam" id="NF008761">
    <property type="entry name" value="PRK11797.1"/>
    <property type="match status" value="1"/>
</dbReference>
<dbReference type="PANTHER" id="PTHR37831">
    <property type="entry name" value="D-RIBOSE PYRANASE"/>
    <property type="match status" value="1"/>
</dbReference>
<dbReference type="PANTHER" id="PTHR37831:SF1">
    <property type="entry name" value="D-RIBOSE PYRANASE"/>
    <property type="match status" value="1"/>
</dbReference>
<dbReference type="Pfam" id="PF05025">
    <property type="entry name" value="RbsD_FucU"/>
    <property type="match status" value="1"/>
</dbReference>
<dbReference type="SUPFAM" id="SSF102546">
    <property type="entry name" value="RbsD-like"/>
    <property type="match status" value="1"/>
</dbReference>
<name>RBSD_STAAB</name>
<evidence type="ECO:0000255" key="1">
    <source>
        <dbReference type="HAMAP-Rule" id="MF_01661"/>
    </source>
</evidence>
<reference key="1">
    <citation type="journal article" date="2007" name="PLoS ONE">
        <title>Molecular correlates of host specialization in Staphylococcus aureus.</title>
        <authorList>
            <person name="Herron-Olson L."/>
            <person name="Fitzgerald J.R."/>
            <person name="Musser J.M."/>
            <person name="Kapur V."/>
        </authorList>
    </citation>
    <scope>NUCLEOTIDE SEQUENCE [LARGE SCALE GENOMIC DNA]</scope>
    <source>
        <strain>bovine RF122 / ET3-1</strain>
    </source>
</reference>
<organism>
    <name type="scientific">Staphylococcus aureus (strain bovine RF122 / ET3-1)</name>
    <dbReference type="NCBI Taxonomy" id="273036"/>
    <lineage>
        <taxon>Bacteria</taxon>
        <taxon>Bacillati</taxon>
        <taxon>Bacillota</taxon>
        <taxon>Bacilli</taxon>
        <taxon>Bacillales</taxon>
        <taxon>Staphylococcaceae</taxon>
        <taxon>Staphylococcus</taxon>
    </lineage>
</organism>